<feature type="chain" id="PRO_1000021428" description="Ribonuclease P protein component">
    <location>
        <begin position="1"/>
        <end position="112"/>
    </location>
</feature>
<evidence type="ECO:0000255" key="1">
    <source>
        <dbReference type="HAMAP-Rule" id="MF_00227"/>
    </source>
</evidence>
<sequence length="112" mass="13677">MQKIRSIKKNWEFQAIINKKNQIVTNYLIFYYVKSDFFEIGISVPKKFANAVKRNYYKRQIKNALYILWKKGEIFLNFRVVLIARKNFLPLSFETKYQKLAKIFKELKRNEK</sequence>
<organism>
    <name type="scientific">Mesomycoplasma hyopneumoniae (strain 7448)</name>
    <name type="common">Mycoplasma hyopneumoniae</name>
    <dbReference type="NCBI Taxonomy" id="262722"/>
    <lineage>
        <taxon>Bacteria</taxon>
        <taxon>Bacillati</taxon>
        <taxon>Mycoplasmatota</taxon>
        <taxon>Mycoplasmoidales</taxon>
        <taxon>Metamycoplasmataceae</taxon>
        <taxon>Mesomycoplasma</taxon>
    </lineage>
</organism>
<name>RNPA_MESH7</name>
<protein>
    <recommendedName>
        <fullName evidence="1">Ribonuclease P protein component</fullName>
        <shortName evidence="1">RNase P protein</shortName>
        <shortName evidence="1">RNaseP protein</shortName>
        <ecNumber evidence="1">3.1.26.5</ecNumber>
    </recommendedName>
    <alternativeName>
        <fullName evidence="1">Protein C5</fullName>
    </alternativeName>
</protein>
<keyword id="KW-0255">Endonuclease</keyword>
<keyword id="KW-0378">Hydrolase</keyword>
<keyword id="KW-0540">Nuclease</keyword>
<keyword id="KW-0694">RNA-binding</keyword>
<keyword id="KW-0819">tRNA processing</keyword>
<accession>Q4A750</accession>
<gene>
    <name evidence="1" type="primary">rnpA</name>
    <name type="ordered locus">MHP7448_0677</name>
</gene>
<proteinExistence type="inferred from homology"/>
<comment type="function">
    <text evidence="1">RNaseP catalyzes the removal of the 5'-leader sequence from pre-tRNA to produce the mature 5'-terminus. It can also cleave other RNA substrates such as 4.5S RNA. The protein component plays an auxiliary but essential role in vivo by binding to the 5'-leader sequence and broadening the substrate specificity of the ribozyme.</text>
</comment>
<comment type="catalytic activity">
    <reaction evidence="1">
        <text>Endonucleolytic cleavage of RNA, removing 5'-extranucleotides from tRNA precursor.</text>
        <dbReference type="EC" id="3.1.26.5"/>
    </reaction>
</comment>
<comment type="subunit">
    <text evidence="1">Consists of a catalytic RNA component (M1 or rnpB) and a protein subunit.</text>
</comment>
<comment type="similarity">
    <text evidence="1">Belongs to the RnpA family.</text>
</comment>
<reference key="1">
    <citation type="journal article" date="2005" name="J. Bacteriol.">
        <title>Swine and poultry pathogens: the complete genome sequences of two strains of Mycoplasma hyopneumoniae and a strain of Mycoplasma synoviae.</title>
        <authorList>
            <person name="Vasconcelos A.T.R."/>
            <person name="Ferreira H.B."/>
            <person name="Bizarro C.V."/>
            <person name="Bonatto S.L."/>
            <person name="Carvalho M.O."/>
            <person name="Pinto P.M."/>
            <person name="Almeida D.F."/>
            <person name="Almeida L.G.P."/>
            <person name="Almeida R."/>
            <person name="Alves-Junior L."/>
            <person name="Assuncao E.N."/>
            <person name="Azevedo V.A.C."/>
            <person name="Bogo M.R."/>
            <person name="Brigido M.M."/>
            <person name="Brocchi M."/>
            <person name="Burity H.A."/>
            <person name="Camargo A.A."/>
            <person name="Camargo S.S."/>
            <person name="Carepo M.S."/>
            <person name="Carraro D.M."/>
            <person name="de Mattos Cascardo J.C."/>
            <person name="Castro L.A."/>
            <person name="Cavalcanti G."/>
            <person name="Chemale G."/>
            <person name="Collevatti R.G."/>
            <person name="Cunha C.W."/>
            <person name="Dallagiovanna B."/>
            <person name="Dambros B.P."/>
            <person name="Dellagostin O.A."/>
            <person name="Falcao C."/>
            <person name="Fantinatti-Garboggini F."/>
            <person name="Felipe M.S.S."/>
            <person name="Fiorentin L."/>
            <person name="Franco G.R."/>
            <person name="Freitas N.S.A."/>
            <person name="Frias D."/>
            <person name="Grangeiro T.B."/>
            <person name="Grisard E.C."/>
            <person name="Guimaraes C.T."/>
            <person name="Hungria M."/>
            <person name="Jardim S.N."/>
            <person name="Krieger M.A."/>
            <person name="Laurino J.P."/>
            <person name="Lima L.F.A."/>
            <person name="Lopes M.I."/>
            <person name="Loreto E.L.S."/>
            <person name="Madeira H.M.F."/>
            <person name="Manfio G.P."/>
            <person name="Maranhao A.Q."/>
            <person name="Martinkovics C.T."/>
            <person name="Medeiros S.R.B."/>
            <person name="Moreira M.A.M."/>
            <person name="Neiva M."/>
            <person name="Ramalho-Neto C.E."/>
            <person name="Nicolas M.F."/>
            <person name="Oliveira S.C."/>
            <person name="Paixao R.F.C."/>
            <person name="Pedrosa F.O."/>
            <person name="Pena S.D.J."/>
            <person name="Pereira M."/>
            <person name="Pereira-Ferrari L."/>
            <person name="Piffer I."/>
            <person name="Pinto L.S."/>
            <person name="Potrich D.P."/>
            <person name="Salim A.C.M."/>
            <person name="Santos F.R."/>
            <person name="Schmitt R."/>
            <person name="Schneider M.P.C."/>
            <person name="Schrank A."/>
            <person name="Schrank I.S."/>
            <person name="Schuck A.F."/>
            <person name="Seuanez H.N."/>
            <person name="Silva D.W."/>
            <person name="Silva R."/>
            <person name="Silva S.C."/>
            <person name="Soares C.M.A."/>
            <person name="Souza K.R.L."/>
            <person name="Souza R.C."/>
            <person name="Staats C.C."/>
            <person name="Steffens M.B.R."/>
            <person name="Teixeira S.M.R."/>
            <person name="Urmenyi T.P."/>
            <person name="Vainstein M.H."/>
            <person name="Zuccherato L.W."/>
            <person name="Simpson A.J.G."/>
            <person name="Zaha A."/>
        </authorList>
    </citation>
    <scope>NUCLEOTIDE SEQUENCE [LARGE SCALE GENOMIC DNA]</scope>
    <source>
        <strain>7448</strain>
    </source>
</reference>
<dbReference type="EC" id="3.1.26.5" evidence="1"/>
<dbReference type="EMBL" id="AE017244">
    <property type="protein sequence ID" value="AAZ54039.1"/>
    <property type="molecule type" value="Genomic_DNA"/>
</dbReference>
<dbReference type="RefSeq" id="WP_011284394.1">
    <property type="nucleotide sequence ID" value="NC_007332.1"/>
</dbReference>
<dbReference type="SMR" id="Q4A750"/>
<dbReference type="GeneID" id="41334979"/>
<dbReference type="KEGG" id="mhp:MHP7448_0677"/>
<dbReference type="HOGENOM" id="CLU_117179_9_1_14"/>
<dbReference type="BRENDA" id="3.1.26.5">
    <property type="organism ID" value="3530"/>
</dbReference>
<dbReference type="Proteomes" id="UP000000553">
    <property type="component" value="Chromosome"/>
</dbReference>
<dbReference type="GO" id="GO:0030677">
    <property type="term" value="C:ribonuclease P complex"/>
    <property type="evidence" value="ECO:0007669"/>
    <property type="project" value="TreeGrafter"/>
</dbReference>
<dbReference type="GO" id="GO:0042781">
    <property type="term" value="F:3'-tRNA processing endoribonuclease activity"/>
    <property type="evidence" value="ECO:0007669"/>
    <property type="project" value="TreeGrafter"/>
</dbReference>
<dbReference type="GO" id="GO:0004526">
    <property type="term" value="F:ribonuclease P activity"/>
    <property type="evidence" value="ECO:0007669"/>
    <property type="project" value="UniProtKB-UniRule"/>
</dbReference>
<dbReference type="GO" id="GO:0000049">
    <property type="term" value="F:tRNA binding"/>
    <property type="evidence" value="ECO:0007669"/>
    <property type="project" value="UniProtKB-UniRule"/>
</dbReference>
<dbReference type="GO" id="GO:0001682">
    <property type="term" value="P:tRNA 5'-leader removal"/>
    <property type="evidence" value="ECO:0007669"/>
    <property type="project" value="UniProtKB-UniRule"/>
</dbReference>
<dbReference type="Gene3D" id="3.30.230.10">
    <property type="match status" value="1"/>
</dbReference>
<dbReference type="HAMAP" id="MF_00227">
    <property type="entry name" value="RNase_P"/>
    <property type="match status" value="1"/>
</dbReference>
<dbReference type="InterPro" id="IPR020568">
    <property type="entry name" value="Ribosomal_Su5_D2-typ_SF"/>
</dbReference>
<dbReference type="InterPro" id="IPR014721">
    <property type="entry name" value="Ribsml_uS5_D2-typ_fold_subgr"/>
</dbReference>
<dbReference type="InterPro" id="IPR000100">
    <property type="entry name" value="RNase_P"/>
</dbReference>
<dbReference type="NCBIfam" id="TIGR00188">
    <property type="entry name" value="rnpA"/>
    <property type="match status" value="1"/>
</dbReference>
<dbReference type="PANTHER" id="PTHR33992">
    <property type="entry name" value="RIBONUCLEASE P PROTEIN COMPONENT"/>
    <property type="match status" value="1"/>
</dbReference>
<dbReference type="PANTHER" id="PTHR33992:SF1">
    <property type="entry name" value="RIBONUCLEASE P PROTEIN COMPONENT"/>
    <property type="match status" value="1"/>
</dbReference>
<dbReference type="Pfam" id="PF00825">
    <property type="entry name" value="Ribonuclease_P"/>
    <property type="match status" value="1"/>
</dbReference>
<dbReference type="SUPFAM" id="SSF54211">
    <property type="entry name" value="Ribosomal protein S5 domain 2-like"/>
    <property type="match status" value="1"/>
</dbReference>